<dbReference type="EC" id="1.11.1.21" evidence="1"/>
<dbReference type="EMBL" id="CP000308">
    <property type="protein sequence ID" value="ABG14787.1"/>
    <property type="molecule type" value="Genomic_DNA"/>
</dbReference>
<dbReference type="RefSeq" id="WP_002209433.1">
    <property type="nucleotide sequence ID" value="NZ_CP009906.1"/>
</dbReference>
<dbReference type="SMR" id="Q1C435"/>
<dbReference type="GeneID" id="57975390"/>
<dbReference type="KEGG" id="ypa:YPA_2825"/>
<dbReference type="Proteomes" id="UP000001971">
    <property type="component" value="Chromosome"/>
</dbReference>
<dbReference type="GO" id="GO:0005829">
    <property type="term" value="C:cytosol"/>
    <property type="evidence" value="ECO:0007669"/>
    <property type="project" value="TreeGrafter"/>
</dbReference>
<dbReference type="GO" id="GO:0004096">
    <property type="term" value="F:catalase activity"/>
    <property type="evidence" value="ECO:0007669"/>
    <property type="project" value="UniProtKB-UniRule"/>
</dbReference>
<dbReference type="GO" id="GO:0020037">
    <property type="term" value="F:heme binding"/>
    <property type="evidence" value="ECO:0007669"/>
    <property type="project" value="InterPro"/>
</dbReference>
<dbReference type="GO" id="GO:0046872">
    <property type="term" value="F:metal ion binding"/>
    <property type="evidence" value="ECO:0007669"/>
    <property type="project" value="UniProtKB-KW"/>
</dbReference>
<dbReference type="GO" id="GO:0070301">
    <property type="term" value="P:cellular response to hydrogen peroxide"/>
    <property type="evidence" value="ECO:0007669"/>
    <property type="project" value="TreeGrafter"/>
</dbReference>
<dbReference type="GO" id="GO:0042744">
    <property type="term" value="P:hydrogen peroxide catabolic process"/>
    <property type="evidence" value="ECO:0007669"/>
    <property type="project" value="UniProtKB-KW"/>
</dbReference>
<dbReference type="CDD" id="cd00649">
    <property type="entry name" value="catalase_peroxidase_1"/>
    <property type="match status" value="1"/>
</dbReference>
<dbReference type="CDD" id="cd08200">
    <property type="entry name" value="catalase_peroxidase_2"/>
    <property type="match status" value="1"/>
</dbReference>
<dbReference type="FunFam" id="1.10.420.10:FF:000002">
    <property type="entry name" value="Catalase-peroxidase"/>
    <property type="match status" value="1"/>
</dbReference>
<dbReference type="FunFam" id="1.10.420.10:FF:000004">
    <property type="entry name" value="Catalase-peroxidase"/>
    <property type="match status" value="1"/>
</dbReference>
<dbReference type="FunFam" id="1.10.520.10:FF:000002">
    <property type="entry name" value="Catalase-peroxidase"/>
    <property type="match status" value="1"/>
</dbReference>
<dbReference type="Gene3D" id="1.10.520.10">
    <property type="match status" value="2"/>
</dbReference>
<dbReference type="Gene3D" id="1.10.420.10">
    <property type="entry name" value="Peroxidase, domain 2"/>
    <property type="match status" value="2"/>
</dbReference>
<dbReference type="HAMAP" id="MF_01961">
    <property type="entry name" value="Catal_peroxid"/>
    <property type="match status" value="1"/>
</dbReference>
<dbReference type="InterPro" id="IPR000763">
    <property type="entry name" value="Catalase_peroxidase"/>
</dbReference>
<dbReference type="InterPro" id="IPR002016">
    <property type="entry name" value="Haem_peroxidase"/>
</dbReference>
<dbReference type="InterPro" id="IPR010255">
    <property type="entry name" value="Haem_peroxidase_sf"/>
</dbReference>
<dbReference type="InterPro" id="IPR019794">
    <property type="entry name" value="Peroxidases_AS"/>
</dbReference>
<dbReference type="InterPro" id="IPR019793">
    <property type="entry name" value="Peroxidases_heam-ligand_BS"/>
</dbReference>
<dbReference type="NCBIfam" id="TIGR00198">
    <property type="entry name" value="cat_per_HPI"/>
    <property type="match status" value="1"/>
</dbReference>
<dbReference type="NCBIfam" id="NF011635">
    <property type="entry name" value="PRK15061.1"/>
    <property type="match status" value="1"/>
</dbReference>
<dbReference type="PANTHER" id="PTHR30555:SF0">
    <property type="entry name" value="CATALASE-PEROXIDASE"/>
    <property type="match status" value="1"/>
</dbReference>
<dbReference type="PANTHER" id="PTHR30555">
    <property type="entry name" value="HYDROPEROXIDASE I, BIFUNCTIONAL CATALASE-PEROXIDASE"/>
    <property type="match status" value="1"/>
</dbReference>
<dbReference type="Pfam" id="PF00141">
    <property type="entry name" value="peroxidase"/>
    <property type="match status" value="2"/>
</dbReference>
<dbReference type="PRINTS" id="PR00460">
    <property type="entry name" value="BPEROXIDASE"/>
</dbReference>
<dbReference type="PRINTS" id="PR00458">
    <property type="entry name" value="PEROXIDASE"/>
</dbReference>
<dbReference type="SUPFAM" id="SSF48113">
    <property type="entry name" value="Heme-dependent peroxidases"/>
    <property type="match status" value="2"/>
</dbReference>
<dbReference type="PROSITE" id="PS00435">
    <property type="entry name" value="PEROXIDASE_1"/>
    <property type="match status" value="1"/>
</dbReference>
<dbReference type="PROSITE" id="PS00436">
    <property type="entry name" value="PEROXIDASE_2"/>
    <property type="match status" value="1"/>
</dbReference>
<dbReference type="PROSITE" id="PS50873">
    <property type="entry name" value="PEROXIDASE_4"/>
    <property type="match status" value="1"/>
</dbReference>
<sequence length="737" mass="81365">MLKKILPVLITLAIVHNTPTAWAAEAPKTDSFYLPKSLDLSPLRLHNIESNPYGKDFNYAQQFKTLDLEAVKKDIKTVLTTSQDWWPADYGNYGPFFIRMAWHGAGTYRIYDGRGGADGGQQRFEPLNSWPDNANLDKARRLLWPIKKKYGAKISWGDLMVLTGNVALESMGFKTLGFAGGREDDWQSDLVYWGAGNKMLSDNRDKNGKLPKPLAATQMGLIYVNPEGPNGKPDPVAAAKDIREAFARMAMNDEETVALIAGGHTFGKAHGAASPEKCLGAAPGEAGLEQQGLGWANKCGSGNGKDTITSGLEGAWTTDPTHFTMQYLSNLYKHEWVLTKSPAGAWQWKPKNAANVVPDATDPTKFHPLMMFTTDIALKVDPEYKKITTRFLENPEEFKMAFARAWFKLTHRDMGPAARYLGDEVPKETFIWQDPLPAANYKMIDSADISELKDKILKTGLSDTKLIKTAWASASTFRGTDFRGGDNGARIRLAPQKDWPVNDPAELHSVLAALMEVQNNFNKDRSDGKKVSLSDLIVLGGNAAIEDAAKKAGYSISIPFTPGRTDASQEETDVSSFAVLEPTADGFRNYYDAKRNTLSPIASLIDRANKLELTVPEMTVLIGGLRVLDVNSGGSKAGVLTNTPGQLNNNFFVNLLDMSTKWTKSPKAEGYFDGYDRKTGKLKWTASSVDLVFGSNPELRAVAEVYASDDAKEKFVHDFTKVWEKVMNLDRFDIKNN</sequence>
<protein>
    <recommendedName>
        <fullName evidence="1">Catalase-peroxidase</fullName>
        <shortName evidence="1">CP</shortName>
        <ecNumber evidence="1">1.11.1.21</ecNumber>
    </recommendedName>
    <alternativeName>
        <fullName evidence="1">Peroxidase/catalase</fullName>
    </alternativeName>
</protein>
<comment type="function">
    <text evidence="1">Bifunctional enzyme with both catalase and broad-spectrum peroxidase activity.</text>
</comment>
<comment type="catalytic activity">
    <reaction evidence="1">
        <text>H2O2 + AH2 = A + 2 H2O</text>
        <dbReference type="Rhea" id="RHEA:30275"/>
        <dbReference type="ChEBI" id="CHEBI:13193"/>
        <dbReference type="ChEBI" id="CHEBI:15377"/>
        <dbReference type="ChEBI" id="CHEBI:16240"/>
        <dbReference type="ChEBI" id="CHEBI:17499"/>
        <dbReference type="EC" id="1.11.1.21"/>
    </reaction>
</comment>
<comment type="catalytic activity">
    <reaction evidence="1">
        <text>2 H2O2 = O2 + 2 H2O</text>
        <dbReference type="Rhea" id="RHEA:20309"/>
        <dbReference type="ChEBI" id="CHEBI:15377"/>
        <dbReference type="ChEBI" id="CHEBI:15379"/>
        <dbReference type="ChEBI" id="CHEBI:16240"/>
        <dbReference type="EC" id="1.11.1.21"/>
    </reaction>
</comment>
<comment type="cofactor">
    <cofactor evidence="1">
        <name>heme b</name>
        <dbReference type="ChEBI" id="CHEBI:60344"/>
    </cofactor>
    <text evidence="1">Binds 1 heme b (iron(II)-protoporphyrin IX) group per dimer.</text>
</comment>
<comment type="subunit">
    <text evidence="1">Homodimer or homotetramer.</text>
</comment>
<comment type="PTM">
    <text evidence="1">Formation of the three residue Trp-Tyr-Met cross-link is important for the catalase, but not the peroxidase activity of the enzyme.</text>
</comment>
<comment type="similarity">
    <text evidence="1">Belongs to the peroxidase family. Peroxidase/catalase subfamily.</text>
</comment>
<organism>
    <name type="scientific">Yersinia pestis bv. Antiqua (strain Antiqua)</name>
    <dbReference type="NCBI Taxonomy" id="360102"/>
    <lineage>
        <taxon>Bacteria</taxon>
        <taxon>Pseudomonadati</taxon>
        <taxon>Pseudomonadota</taxon>
        <taxon>Gammaproteobacteria</taxon>
        <taxon>Enterobacterales</taxon>
        <taxon>Yersiniaceae</taxon>
        <taxon>Yersinia</taxon>
    </lineage>
</organism>
<evidence type="ECO:0000255" key="1">
    <source>
        <dbReference type="HAMAP-Rule" id="MF_01961"/>
    </source>
</evidence>
<keyword id="KW-0349">Heme</keyword>
<keyword id="KW-0376">Hydrogen peroxide</keyword>
<keyword id="KW-0408">Iron</keyword>
<keyword id="KW-0479">Metal-binding</keyword>
<keyword id="KW-0560">Oxidoreductase</keyword>
<keyword id="KW-0575">Peroxidase</keyword>
<keyword id="KW-0732">Signal</keyword>
<accession>Q1C435</accession>
<proteinExistence type="inferred from homology"/>
<feature type="signal peptide" evidence="1">
    <location>
        <begin position="1"/>
        <end position="23"/>
    </location>
</feature>
<feature type="chain" id="PRO_5000116181" description="Catalase-peroxidase">
    <location>
        <begin position="24"/>
        <end position="737"/>
    </location>
</feature>
<feature type="active site" description="Proton acceptor" evidence="1">
    <location>
        <position position="103"/>
    </location>
</feature>
<feature type="binding site" description="axial binding residue" evidence="1">
    <location>
        <position position="264"/>
    </location>
    <ligand>
        <name>heme b</name>
        <dbReference type="ChEBI" id="CHEBI:60344"/>
    </ligand>
    <ligandPart>
        <name>Fe</name>
        <dbReference type="ChEBI" id="CHEBI:18248"/>
    </ligandPart>
</feature>
<feature type="site" description="Transition state stabilizer" evidence="1">
    <location>
        <position position="99"/>
    </location>
</feature>
<feature type="cross-link" description="Tryptophyl-tyrosyl-methioninium (Trp-Tyr) (with M-249)" evidence="1">
    <location>
        <begin position="102"/>
        <end position="223"/>
    </location>
</feature>
<feature type="cross-link" description="Tryptophyl-tyrosyl-methioninium (Tyr-Met) (with W-102)" evidence="1">
    <location>
        <begin position="223"/>
        <end position="249"/>
    </location>
</feature>
<name>KATG_YERPA</name>
<reference key="1">
    <citation type="journal article" date="2006" name="J. Bacteriol.">
        <title>Complete genome sequence of Yersinia pestis strains Antiqua and Nepal516: evidence of gene reduction in an emerging pathogen.</title>
        <authorList>
            <person name="Chain P.S.G."/>
            <person name="Hu P."/>
            <person name="Malfatti S.A."/>
            <person name="Radnedge L."/>
            <person name="Larimer F."/>
            <person name="Vergez L.M."/>
            <person name="Worsham P."/>
            <person name="Chu M.C."/>
            <person name="Andersen G.L."/>
        </authorList>
    </citation>
    <scope>NUCLEOTIDE SEQUENCE [LARGE SCALE GENOMIC DNA]</scope>
    <source>
        <strain>Antiqua</strain>
    </source>
</reference>
<gene>
    <name evidence="1" type="primary">katG</name>
    <name type="ordered locus">YPA_2825</name>
</gene>